<protein>
    <recommendedName>
        <fullName evidence="1">Aspartate 1-decarboxylase</fullName>
        <ecNumber evidence="1">4.1.1.11</ecNumber>
    </recommendedName>
    <alternativeName>
        <fullName evidence="1">Aspartate alpha-decarboxylase</fullName>
    </alternativeName>
    <component>
        <recommendedName>
            <fullName evidence="1">Aspartate 1-decarboxylase beta chain</fullName>
        </recommendedName>
    </component>
    <component>
        <recommendedName>
            <fullName evidence="1">Aspartate 1-decarboxylase alpha chain</fullName>
        </recommendedName>
    </component>
</protein>
<reference key="1">
    <citation type="journal article" date="2011" name="Stand. Genomic Sci.">
        <title>Complete genome sequence of the filamentous gliding predatory bacterium Herpetosiphon aurantiacus type strain (114-95(T)).</title>
        <authorList>
            <person name="Kiss H."/>
            <person name="Nett M."/>
            <person name="Domin N."/>
            <person name="Martin K."/>
            <person name="Maresca J.A."/>
            <person name="Copeland A."/>
            <person name="Lapidus A."/>
            <person name="Lucas S."/>
            <person name="Berry K.W."/>
            <person name="Glavina Del Rio T."/>
            <person name="Dalin E."/>
            <person name="Tice H."/>
            <person name="Pitluck S."/>
            <person name="Richardson P."/>
            <person name="Bruce D."/>
            <person name="Goodwin L."/>
            <person name="Han C."/>
            <person name="Detter J.C."/>
            <person name="Schmutz J."/>
            <person name="Brettin T."/>
            <person name="Land M."/>
            <person name="Hauser L."/>
            <person name="Kyrpides N.C."/>
            <person name="Ivanova N."/>
            <person name="Goeker M."/>
            <person name="Woyke T."/>
            <person name="Klenk H.P."/>
            <person name="Bryant D.A."/>
        </authorList>
    </citation>
    <scope>NUCLEOTIDE SEQUENCE [LARGE SCALE GENOMIC DNA]</scope>
    <source>
        <strain>ATCC 23779 / DSM 785 / 114-95</strain>
    </source>
</reference>
<comment type="function">
    <text evidence="1">Catalyzes the pyruvoyl-dependent decarboxylation of aspartate to produce beta-alanine.</text>
</comment>
<comment type="catalytic activity">
    <reaction evidence="1">
        <text>L-aspartate + H(+) = beta-alanine + CO2</text>
        <dbReference type="Rhea" id="RHEA:19497"/>
        <dbReference type="ChEBI" id="CHEBI:15378"/>
        <dbReference type="ChEBI" id="CHEBI:16526"/>
        <dbReference type="ChEBI" id="CHEBI:29991"/>
        <dbReference type="ChEBI" id="CHEBI:57966"/>
        <dbReference type="EC" id="4.1.1.11"/>
    </reaction>
</comment>
<comment type="cofactor">
    <cofactor evidence="1">
        <name>pyruvate</name>
        <dbReference type="ChEBI" id="CHEBI:15361"/>
    </cofactor>
    <text evidence="1">Binds 1 pyruvoyl group covalently per subunit.</text>
</comment>
<comment type="pathway">
    <text evidence="1">Cofactor biosynthesis; (R)-pantothenate biosynthesis; beta-alanine from L-aspartate: step 1/1.</text>
</comment>
<comment type="subunit">
    <text evidence="1">Heterooctamer of four alpha and four beta subunits.</text>
</comment>
<comment type="subcellular location">
    <subcellularLocation>
        <location evidence="1">Cytoplasm</location>
    </subcellularLocation>
</comment>
<comment type="PTM">
    <text evidence="1">Is synthesized initially as an inactive proenzyme, which is activated by self-cleavage at a specific serine bond to produce a beta-subunit with a hydroxyl group at its C-terminus and an alpha-subunit with a pyruvoyl group at its N-terminus.</text>
</comment>
<comment type="similarity">
    <text evidence="1">Belongs to the PanD family.</text>
</comment>
<dbReference type="EC" id="4.1.1.11" evidence="1"/>
<dbReference type="EMBL" id="CP000875">
    <property type="protein sequence ID" value="ABX03037.1"/>
    <property type="molecule type" value="Genomic_DNA"/>
</dbReference>
<dbReference type="SMR" id="A9AUB8"/>
<dbReference type="FunCoup" id="A9AUB8">
    <property type="interactions" value="203"/>
</dbReference>
<dbReference type="STRING" id="316274.Haur_0386"/>
<dbReference type="KEGG" id="hau:Haur_0386"/>
<dbReference type="eggNOG" id="COG0853">
    <property type="taxonomic scope" value="Bacteria"/>
</dbReference>
<dbReference type="HOGENOM" id="CLU_115305_2_0_0"/>
<dbReference type="InParanoid" id="A9AUB8"/>
<dbReference type="UniPathway" id="UPA00028">
    <property type="reaction ID" value="UER00002"/>
</dbReference>
<dbReference type="Proteomes" id="UP000000787">
    <property type="component" value="Chromosome"/>
</dbReference>
<dbReference type="GO" id="GO:0005829">
    <property type="term" value="C:cytosol"/>
    <property type="evidence" value="ECO:0007669"/>
    <property type="project" value="TreeGrafter"/>
</dbReference>
<dbReference type="GO" id="GO:0004068">
    <property type="term" value="F:aspartate 1-decarboxylase activity"/>
    <property type="evidence" value="ECO:0007669"/>
    <property type="project" value="UniProtKB-UniRule"/>
</dbReference>
<dbReference type="GO" id="GO:0006523">
    <property type="term" value="P:alanine biosynthetic process"/>
    <property type="evidence" value="ECO:0007669"/>
    <property type="project" value="InterPro"/>
</dbReference>
<dbReference type="GO" id="GO:0015940">
    <property type="term" value="P:pantothenate biosynthetic process"/>
    <property type="evidence" value="ECO:0007669"/>
    <property type="project" value="UniProtKB-UniRule"/>
</dbReference>
<dbReference type="CDD" id="cd06919">
    <property type="entry name" value="Asp_decarbox"/>
    <property type="match status" value="1"/>
</dbReference>
<dbReference type="Gene3D" id="2.40.40.20">
    <property type="match status" value="1"/>
</dbReference>
<dbReference type="HAMAP" id="MF_00446">
    <property type="entry name" value="PanD"/>
    <property type="match status" value="1"/>
</dbReference>
<dbReference type="InterPro" id="IPR009010">
    <property type="entry name" value="Asp_de-COase-like_dom_sf"/>
</dbReference>
<dbReference type="InterPro" id="IPR003190">
    <property type="entry name" value="Asp_decarbox"/>
</dbReference>
<dbReference type="NCBIfam" id="TIGR00223">
    <property type="entry name" value="panD"/>
    <property type="match status" value="1"/>
</dbReference>
<dbReference type="PANTHER" id="PTHR21012">
    <property type="entry name" value="ASPARTATE 1-DECARBOXYLASE"/>
    <property type="match status" value="1"/>
</dbReference>
<dbReference type="PANTHER" id="PTHR21012:SF0">
    <property type="entry name" value="ASPARTATE 1-DECARBOXYLASE"/>
    <property type="match status" value="1"/>
</dbReference>
<dbReference type="Pfam" id="PF02261">
    <property type="entry name" value="Asp_decarbox"/>
    <property type="match status" value="1"/>
</dbReference>
<dbReference type="PIRSF" id="PIRSF006246">
    <property type="entry name" value="Asp_decarbox"/>
    <property type="match status" value="1"/>
</dbReference>
<dbReference type="SUPFAM" id="SSF50692">
    <property type="entry name" value="ADC-like"/>
    <property type="match status" value="1"/>
</dbReference>
<organism>
    <name type="scientific">Herpetosiphon aurantiacus (strain ATCC 23779 / DSM 785 / 114-95)</name>
    <dbReference type="NCBI Taxonomy" id="316274"/>
    <lineage>
        <taxon>Bacteria</taxon>
        <taxon>Bacillati</taxon>
        <taxon>Chloroflexota</taxon>
        <taxon>Chloroflexia</taxon>
        <taxon>Herpetosiphonales</taxon>
        <taxon>Herpetosiphonaceae</taxon>
        <taxon>Herpetosiphon</taxon>
    </lineage>
</organism>
<sequence length="125" mass="13476">MIRTLVHAKIHRATVTGADLNYVGSITIDEDLLEAAGIWPFERVQVVDVNNGARLETYAIVGERGSGTIQLNGAAAHLVNVGDLVIIMAYAQVDAKPEEWEPTVVFVNEQNAITEVKALLPVGGR</sequence>
<name>PAND_HERA2</name>
<feature type="chain" id="PRO_1000124833" description="Aspartate 1-decarboxylase beta chain" evidence="1">
    <location>
        <begin position="1"/>
        <end position="24"/>
    </location>
</feature>
<feature type="chain" id="PRO_1000124834" description="Aspartate 1-decarboxylase alpha chain" evidence="1">
    <location>
        <begin position="25"/>
        <end position="125"/>
    </location>
</feature>
<feature type="active site" description="Schiff-base intermediate with substrate; via pyruvic acid" evidence="1">
    <location>
        <position position="25"/>
    </location>
</feature>
<feature type="active site" description="Proton donor" evidence="1">
    <location>
        <position position="58"/>
    </location>
</feature>
<feature type="binding site" evidence="1">
    <location>
        <position position="57"/>
    </location>
    <ligand>
        <name>substrate</name>
    </ligand>
</feature>
<feature type="binding site" evidence="1">
    <location>
        <begin position="73"/>
        <end position="75"/>
    </location>
    <ligand>
        <name>substrate</name>
    </ligand>
</feature>
<feature type="modified residue" description="Pyruvic acid (Ser)" evidence="1">
    <location>
        <position position="25"/>
    </location>
</feature>
<gene>
    <name evidence="1" type="primary">panD</name>
    <name type="ordered locus">Haur_0386</name>
</gene>
<accession>A9AUB8</accession>
<keyword id="KW-0068">Autocatalytic cleavage</keyword>
<keyword id="KW-0963">Cytoplasm</keyword>
<keyword id="KW-0210">Decarboxylase</keyword>
<keyword id="KW-0456">Lyase</keyword>
<keyword id="KW-0566">Pantothenate biosynthesis</keyword>
<keyword id="KW-0670">Pyruvate</keyword>
<keyword id="KW-0704">Schiff base</keyword>
<keyword id="KW-0865">Zymogen</keyword>
<evidence type="ECO:0000255" key="1">
    <source>
        <dbReference type="HAMAP-Rule" id="MF_00446"/>
    </source>
</evidence>
<proteinExistence type="inferred from homology"/>